<keyword id="KW-0137">Centromere</keyword>
<keyword id="KW-0158">Chromosome</keyword>
<keyword id="KW-0539">Nucleus</keyword>
<keyword id="KW-1185">Reference proteome</keyword>
<evidence type="ECO:0000250" key="1"/>
<evidence type="ECO:0000305" key="2"/>
<protein>
    <recommendedName>
        <fullName>Centromere protein N-B</fullName>
        <shortName>CENP-N-B</shortName>
    </recommendedName>
</protein>
<comment type="function">
    <text evidence="1">Probable component of a centromeric complex involved in assembly of kinetochore proteins, mitotic progression and chromosome segregation.</text>
</comment>
<comment type="subcellular location">
    <subcellularLocation>
        <location evidence="1">Nucleus</location>
    </subcellularLocation>
    <subcellularLocation>
        <location evidence="1">Chromosome</location>
        <location evidence="1">Centromere</location>
    </subcellularLocation>
    <text evidence="1">Localizes exclusively in the centromeres.</text>
</comment>
<comment type="similarity">
    <text evidence="2">Belongs to the CENP-N/CHL4 family.</text>
</comment>
<comment type="sequence caution" evidence="2">
    <conflict type="erroneous initiation">
        <sequence resource="EMBL-CDS" id="AAH84956"/>
    </conflict>
</comment>
<dbReference type="EMBL" id="BC084956">
    <property type="protein sequence ID" value="AAH84956.1"/>
    <property type="status" value="ALT_INIT"/>
    <property type="molecule type" value="mRNA"/>
</dbReference>
<dbReference type="RefSeq" id="NP_001088558.1">
    <property type="nucleotide sequence ID" value="NM_001095089.1"/>
</dbReference>
<dbReference type="SMR" id="Q5U4T8"/>
<dbReference type="DNASU" id="495435"/>
<dbReference type="GeneID" id="495435"/>
<dbReference type="KEGG" id="xla:495435"/>
<dbReference type="AGR" id="Xenbase:XB-GENE-6253842"/>
<dbReference type="CTD" id="495435"/>
<dbReference type="Xenbase" id="XB-GENE-6253842">
    <property type="gene designation" value="cenpn.L"/>
</dbReference>
<dbReference type="OrthoDB" id="6585699at2759"/>
<dbReference type="Proteomes" id="UP000186698">
    <property type="component" value="Chromosome 4L"/>
</dbReference>
<dbReference type="Bgee" id="495435">
    <property type="expression patterns" value="Expressed in egg cell and 15 other cell types or tissues"/>
</dbReference>
<dbReference type="GO" id="GO:0000775">
    <property type="term" value="C:chromosome, centromeric region"/>
    <property type="evidence" value="ECO:0007669"/>
    <property type="project" value="UniProtKB-SubCell"/>
</dbReference>
<dbReference type="GO" id="GO:0005654">
    <property type="term" value="C:nucleoplasm"/>
    <property type="evidence" value="ECO:0000318"/>
    <property type="project" value="GO_Central"/>
</dbReference>
<dbReference type="GO" id="GO:0034080">
    <property type="term" value="P:CENP-A containing chromatin assembly"/>
    <property type="evidence" value="ECO:0007669"/>
    <property type="project" value="InterPro"/>
</dbReference>
<dbReference type="GO" id="GO:0007059">
    <property type="term" value="P:chromosome segregation"/>
    <property type="evidence" value="ECO:0007669"/>
    <property type="project" value="InterPro"/>
</dbReference>
<dbReference type="InterPro" id="IPR052011">
    <property type="entry name" value="CENP-NAC/CAD_complex"/>
</dbReference>
<dbReference type="InterPro" id="IPR007902">
    <property type="entry name" value="Chl4/mis15/CENP-N"/>
</dbReference>
<dbReference type="PANTHER" id="PTHR46790">
    <property type="entry name" value="CENTROMERE PROTEIN N"/>
    <property type="match status" value="1"/>
</dbReference>
<dbReference type="PANTHER" id="PTHR46790:SF1">
    <property type="entry name" value="CENTROMERE PROTEIN N"/>
    <property type="match status" value="1"/>
</dbReference>
<dbReference type="Pfam" id="PF05238">
    <property type="entry name" value="CENP-N"/>
    <property type="match status" value="1"/>
</dbReference>
<proteinExistence type="evidence at transcript level"/>
<reference key="1">
    <citation type="submission" date="2004-10" db="EMBL/GenBank/DDBJ databases">
        <authorList>
            <consortium name="NIH - Xenopus Gene Collection (XGC) project"/>
        </authorList>
    </citation>
    <scope>NUCLEOTIDE SEQUENCE [LARGE SCALE MRNA]</scope>
    <source>
        <tissue>Oocyte</tissue>
    </source>
</reference>
<name>CENNB_XENLA</name>
<organism>
    <name type="scientific">Xenopus laevis</name>
    <name type="common">African clawed frog</name>
    <dbReference type="NCBI Taxonomy" id="8355"/>
    <lineage>
        <taxon>Eukaryota</taxon>
        <taxon>Metazoa</taxon>
        <taxon>Chordata</taxon>
        <taxon>Craniata</taxon>
        <taxon>Vertebrata</taxon>
        <taxon>Euteleostomi</taxon>
        <taxon>Amphibia</taxon>
        <taxon>Batrachia</taxon>
        <taxon>Anura</taxon>
        <taxon>Pipoidea</taxon>
        <taxon>Pipidae</taxon>
        <taxon>Xenopodinae</taxon>
        <taxon>Xenopus</taxon>
        <taxon>Xenopus</taxon>
    </lineage>
</organism>
<sequence length="348" mass="39713">MDEWLAEFIKRTILKLPFSETATILKTWGFLTESELQTFTLRYPKEVTATEVVRFCEARNATLDHAAALDLVFNHAYSNKKTWTVYQMSKRLESENDLFDASEFKLQFKKSIHAVSKNVTINFKEFGEALWIRIAWGTHNSRPNQYKATFAVYHSQTPYVFITGLGKACQPLMCQALVIASKYSQIQEMELKSRCLESLKDIVFKRFNQPFSSHHSKPHEKALTPNIVDPRVTYENMREKDRVYHLTCETFGEGPLPKLELASYKLETMFKADSAMSGNLTAVNEPFRCVVKFSSPHLLEAIRSLAPAGIAEAPISTLLSCIPHKARNSFKITEKRSMHPSSSQPTNV</sequence>
<feature type="chain" id="PRO_0000249499" description="Centromere protein N-B">
    <location>
        <begin position="1"/>
        <end position="348"/>
    </location>
</feature>
<gene>
    <name type="primary">cenpn-b</name>
</gene>
<accession>Q5U4T8</accession>